<reference key="1">
    <citation type="journal article" date="2009" name="J. Bacteriol.">
        <title>Genome sequence of Azotobacter vinelandii, an obligate aerobe specialized to support diverse anaerobic metabolic processes.</title>
        <authorList>
            <person name="Setubal J.C."/>
            <person name="Dos Santos P."/>
            <person name="Goldman B.S."/>
            <person name="Ertesvaag H."/>
            <person name="Espin G."/>
            <person name="Rubio L.M."/>
            <person name="Valla S."/>
            <person name="Almeida N.F."/>
            <person name="Balasubramanian D."/>
            <person name="Cromes L."/>
            <person name="Curatti L."/>
            <person name="Du Z."/>
            <person name="Godsy E."/>
            <person name="Goodner B."/>
            <person name="Hellner-Burris K."/>
            <person name="Hernandez J.A."/>
            <person name="Houmiel K."/>
            <person name="Imperial J."/>
            <person name="Kennedy C."/>
            <person name="Larson T.J."/>
            <person name="Latreille P."/>
            <person name="Ligon L.S."/>
            <person name="Lu J."/>
            <person name="Maerk M."/>
            <person name="Miller N.M."/>
            <person name="Norton S."/>
            <person name="O'Carroll I.P."/>
            <person name="Paulsen I."/>
            <person name="Raulfs E.C."/>
            <person name="Roemer R."/>
            <person name="Rosser J."/>
            <person name="Segura D."/>
            <person name="Slater S."/>
            <person name="Stricklin S.L."/>
            <person name="Studholme D.J."/>
            <person name="Sun J."/>
            <person name="Viana C.J."/>
            <person name="Wallin E."/>
            <person name="Wang B."/>
            <person name="Wheeler C."/>
            <person name="Zhu H."/>
            <person name="Dean D.R."/>
            <person name="Dixon R."/>
            <person name="Wood D."/>
        </authorList>
    </citation>
    <scope>NUCLEOTIDE SEQUENCE [LARGE SCALE GENOMIC DNA]</scope>
    <source>
        <strain>DJ / ATCC BAA-1303</strain>
    </source>
</reference>
<name>METK_AZOVD</name>
<protein>
    <recommendedName>
        <fullName evidence="1">S-adenosylmethionine synthase</fullName>
        <shortName evidence="1">AdoMet synthase</shortName>
        <ecNumber evidence="1">2.5.1.6</ecNumber>
    </recommendedName>
    <alternativeName>
        <fullName evidence="1">MAT</fullName>
    </alternativeName>
    <alternativeName>
        <fullName evidence="1">Methionine adenosyltransferase</fullName>
    </alternativeName>
</protein>
<gene>
    <name evidence="1" type="primary">metK</name>
    <name type="ordered locus">Avin_05530</name>
</gene>
<sequence>MSEYSLFTSESVSEGHPDKIADQISDAVLDAIIAEDKHARVACETLVKTGVAIVAGEITTSAWIDLEELVRKVIVDIGYDSSDVGYDGHTCGIINIIGKQSVDINQGVDRAKPEDQGAGDQGLMFGYASDETEVLMPAPICFSHRLVERQTEARKSGLLPWLRPDAKSQVTCRYENGKVVGIDAVVLSTQHNPEITQADLHEAVMELIIKHTLPAELLHKDTQFHINPTGKFVIGGPVGDCGLTGRKIIVDSYGGMARHGGGAFSGKDPSKVDRSAAYAGRYVAKNIVAAGLAERCEIQVSYAIGVAQPTSISINTFGTGKIGDDRIVQLVREHFDLRPYAITHMLDLLHPMYRPTAAYGHFGRTPVEMTVGNDSFTAFTWERTDKAEALRSDAGL</sequence>
<organism>
    <name type="scientific">Azotobacter vinelandii (strain DJ / ATCC BAA-1303)</name>
    <dbReference type="NCBI Taxonomy" id="322710"/>
    <lineage>
        <taxon>Bacteria</taxon>
        <taxon>Pseudomonadati</taxon>
        <taxon>Pseudomonadota</taxon>
        <taxon>Gammaproteobacteria</taxon>
        <taxon>Pseudomonadales</taxon>
        <taxon>Pseudomonadaceae</taxon>
        <taxon>Azotobacter</taxon>
    </lineage>
</organism>
<evidence type="ECO:0000255" key="1">
    <source>
        <dbReference type="HAMAP-Rule" id="MF_00086"/>
    </source>
</evidence>
<keyword id="KW-0067">ATP-binding</keyword>
<keyword id="KW-0963">Cytoplasm</keyword>
<keyword id="KW-0460">Magnesium</keyword>
<keyword id="KW-0479">Metal-binding</keyword>
<keyword id="KW-0547">Nucleotide-binding</keyword>
<keyword id="KW-0554">One-carbon metabolism</keyword>
<keyword id="KW-0630">Potassium</keyword>
<keyword id="KW-0808">Transferase</keyword>
<accession>C1DKE3</accession>
<dbReference type="EC" id="2.5.1.6" evidence="1"/>
<dbReference type="EMBL" id="CP001157">
    <property type="protein sequence ID" value="ACO76806.1"/>
    <property type="molecule type" value="Genomic_DNA"/>
</dbReference>
<dbReference type="RefSeq" id="WP_012699234.1">
    <property type="nucleotide sequence ID" value="NC_012560.1"/>
</dbReference>
<dbReference type="SMR" id="C1DKE3"/>
<dbReference type="STRING" id="322710.Avin_05530"/>
<dbReference type="EnsemblBacteria" id="ACO76806">
    <property type="protein sequence ID" value="ACO76806"/>
    <property type="gene ID" value="Avin_05530"/>
</dbReference>
<dbReference type="GeneID" id="88183970"/>
<dbReference type="KEGG" id="avn:Avin_05530"/>
<dbReference type="eggNOG" id="COG0192">
    <property type="taxonomic scope" value="Bacteria"/>
</dbReference>
<dbReference type="HOGENOM" id="CLU_041802_1_1_6"/>
<dbReference type="OrthoDB" id="9801686at2"/>
<dbReference type="UniPathway" id="UPA00315">
    <property type="reaction ID" value="UER00080"/>
</dbReference>
<dbReference type="Proteomes" id="UP000002424">
    <property type="component" value="Chromosome"/>
</dbReference>
<dbReference type="GO" id="GO:0005737">
    <property type="term" value="C:cytoplasm"/>
    <property type="evidence" value="ECO:0007669"/>
    <property type="project" value="UniProtKB-SubCell"/>
</dbReference>
<dbReference type="GO" id="GO:0005524">
    <property type="term" value="F:ATP binding"/>
    <property type="evidence" value="ECO:0007669"/>
    <property type="project" value="UniProtKB-UniRule"/>
</dbReference>
<dbReference type="GO" id="GO:0000287">
    <property type="term" value="F:magnesium ion binding"/>
    <property type="evidence" value="ECO:0007669"/>
    <property type="project" value="UniProtKB-UniRule"/>
</dbReference>
<dbReference type="GO" id="GO:0004478">
    <property type="term" value="F:methionine adenosyltransferase activity"/>
    <property type="evidence" value="ECO:0007669"/>
    <property type="project" value="UniProtKB-UniRule"/>
</dbReference>
<dbReference type="GO" id="GO:0006730">
    <property type="term" value="P:one-carbon metabolic process"/>
    <property type="evidence" value="ECO:0007669"/>
    <property type="project" value="UniProtKB-KW"/>
</dbReference>
<dbReference type="GO" id="GO:0006556">
    <property type="term" value="P:S-adenosylmethionine biosynthetic process"/>
    <property type="evidence" value="ECO:0007669"/>
    <property type="project" value="UniProtKB-UniRule"/>
</dbReference>
<dbReference type="CDD" id="cd18079">
    <property type="entry name" value="S-AdoMet_synt"/>
    <property type="match status" value="1"/>
</dbReference>
<dbReference type="FunFam" id="3.30.300.10:FF:000003">
    <property type="entry name" value="S-adenosylmethionine synthase"/>
    <property type="match status" value="1"/>
</dbReference>
<dbReference type="Gene3D" id="3.30.300.10">
    <property type="match status" value="3"/>
</dbReference>
<dbReference type="HAMAP" id="MF_00086">
    <property type="entry name" value="S_AdoMet_synth1"/>
    <property type="match status" value="1"/>
</dbReference>
<dbReference type="InterPro" id="IPR022631">
    <property type="entry name" value="ADOMET_SYNTHASE_CS"/>
</dbReference>
<dbReference type="InterPro" id="IPR022630">
    <property type="entry name" value="S-AdoMet_synt_C"/>
</dbReference>
<dbReference type="InterPro" id="IPR022629">
    <property type="entry name" value="S-AdoMet_synt_central"/>
</dbReference>
<dbReference type="InterPro" id="IPR022628">
    <property type="entry name" value="S-AdoMet_synt_N"/>
</dbReference>
<dbReference type="InterPro" id="IPR002133">
    <property type="entry name" value="S-AdoMet_synthetase"/>
</dbReference>
<dbReference type="InterPro" id="IPR022636">
    <property type="entry name" value="S-AdoMet_synthetase_sfam"/>
</dbReference>
<dbReference type="NCBIfam" id="TIGR01034">
    <property type="entry name" value="metK"/>
    <property type="match status" value="1"/>
</dbReference>
<dbReference type="PANTHER" id="PTHR11964">
    <property type="entry name" value="S-ADENOSYLMETHIONINE SYNTHETASE"/>
    <property type="match status" value="1"/>
</dbReference>
<dbReference type="Pfam" id="PF02773">
    <property type="entry name" value="S-AdoMet_synt_C"/>
    <property type="match status" value="1"/>
</dbReference>
<dbReference type="Pfam" id="PF02772">
    <property type="entry name" value="S-AdoMet_synt_M"/>
    <property type="match status" value="1"/>
</dbReference>
<dbReference type="Pfam" id="PF00438">
    <property type="entry name" value="S-AdoMet_synt_N"/>
    <property type="match status" value="1"/>
</dbReference>
<dbReference type="PIRSF" id="PIRSF000497">
    <property type="entry name" value="MAT"/>
    <property type="match status" value="1"/>
</dbReference>
<dbReference type="SUPFAM" id="SSF55973">
    <property type="entry name" value="S-adenosylmethionine synthetase"/>
    <property type="match status" value="3"/>
</dbReference>
<dbReference type="PROSITE" id="PS00376">
    <property type="entry name" value="ADOMET_SYNTHASE_1"/>
    <property type="match status" value="1"/>
</dbReference>
<dbReference type="PROSITE" id="PS00377">
    <property type="entry name" value="ADOMET_SYNTHASE_2"/>
    <property type="match status" value="1"/>
</dbReference>
<comment type="function">
    <text evidence="1">Catalyzes the formation of S-adenosylmethionine (AdoMet) from methionine and ATP. The overall synthetic reaction is composed of two sequential steps, AdoMet formation and the subsequent tripolyphosphate hydrolysis which occurs prior to release of AdoMet from the enzyme.</text>
</comment>
<comment type="catalytic activity">
    <reaction evidence="1">
        <text>L-methionine + ATP + H2O = S-adenosyl-L-methionine + phosphate + diphosphate</text>
        <dbReference type="Rhea" id="RHEA:21080"/>
        <dbReference type="ChEBI" id="CHEBI:15377"/>
        <dbReference type="ChEBI" id="CHEBI:30616"/>
        <dbReference type="ChEBI" id="CHEBI:33019"/>
        <dbReference type="ChEBI" id="CHEBI:43474"/>
        <dbReference type="ChEBI" id="CHEBI:57844"/>
        <dbReference type="ChEBI" id="CHEBI:59789"/>
        <dbReference type="EC" id="2.5.1.6"/>
    </reaction>
</comment>
<comment type="cofactor">
    <cofactor evidence="1">
        <name>Mg(2+)</name>
        <dbReference type="ChEBI" id="CHEBI:18420"/>
    </cofactor>
    <text evidence="1">Binds 2 divalent ions per subunit.</text>
</comment>
<comment type="cofactor">
    <cofactor evidence="1">
        <name>K(+)</name>
        <dbReference type="ChEBI" id="CHEBI:29103"/>
    </cofactor>
    <text evidence="1">Binds 1 potassium ion per subunit.</text>
</comment>
<comment type="pathway">
    <text evidence="1">Amino-acid biosynthesis; S-adenosyl-L-methionine biosynthesis; S-adenosyl-L-methionine from L-methionine: step 1/1.</text>
</comment>
<comment type="subunit">
    <text evidence="1">Homotetramer; dimer of dimers.</text>
</comment>
<comment type="subcellular location">
    <subcellularLocation>
        <location evidence="1">Cytoplasm</location>
    </subcellularLocation>
</comment>
<comment type="similarity">
    <text evidence="1">Belongs to the AdoMet synthase family.</text>
</comment>
<proteinExistence type="inferred from homology"/>
<feature type="chain" id="PRO_1000202611" description="S-adenosylmethionine synthase">
    <location>
        <begin position="1"/>
        <end position="396"/>
    </location>
</feature>
<feature type="region of interest" description="Flexible loop" evidence="1">
    <location>
        <begin position="100"/>
        <end position="110"/>
    </location>
</feature>
<feature type="binding site" description="in other chain" evidence="1">
    <location>
        <position position="16"/>
    </location>
    <ligand>
        <name>ATP</name>
        <dbReference type="ChEBI" id="CHEBI:30616"/>
        <note>ligand shared between two neighboring subunits</note>
    </ligand>
</feature>
<feature type="binding site" evidence="1">
    <location>
        <position position="18"/>
    </location>
    <ligand>
        <name>Mg(2+)</name>
        <dbReference type="ChEBI" id="CHEBI:18420"/>
    </ligand>
</feature>
<feature type="binding site" evidence="1">
    <location>
        <position position="44"/>
    </location>
    <ligand>
        <name>K(+)</name>
        <dbReference type="ChEBI" id="CHEBI:29103"/>
    </ligand>
</feature>
<feature type="binding site" description="in other chain" evidence="1">
    <location>
        <position position="57"/>
    </location>
    <ligand>
        <name>L-methionine</name>
        <dbReference type="ChEBI" id="CHEBI:57844"/>
        <note>ligand shared between two neighboring subunits</note>
    </ligand>
</feature>
<feature type="binding site" description="in other chain" evidence="1">
    <location>
        <position position="100"/>
    </location>
    <ligand>
        <name>L-methionine</name>
        <dbReference type="ChEBI" id="CHEBI:57844"/>
        <note>ligand shared between two neighboring subunits</note>
    </ligand>
</feature>
<feature type="binding site" description="in other chain" evidence="1">
    <location>
        <begin position="165"/>
        <end position="167"/>
    </location>
    <ligand>
        <name>ATP</name>
        <dbReference type="ChEBI" id="CHEBI:30616"/>
        <note>ligand shared between two neighboring subunits</note>
    </ligand>
</feature>
<feature type="binding site" description="in other chain" evidence="1">
    <location>
        <begin position="231"/>
        <end position="232"/>
    </location>
    <ligand>
        <name>ATP</name>
        <dbReference type="ChEBI" id="CHEBI:30616"/>
        <note>ligand shared between two neighboring subunits</note>
    </ligand>
</feature>
<feature type="binding site" evidence="1">
    <location>
        <position position="240"/>
    </location>
    <ligand>
        <name>ATP</name>
        <dbReference type="ChEBI" id="CHEBI:30616"/>
        <note>ligand shared between two neighboring subunits</note>
    </ligand>
</feature>
<feature type="binding site" evidence="1">
    <location>
        <position position="240"/>
    </location>
    <ligand>
        <name>L-methionine</name>
        <dbReference type="ChEBI" id="CHEBI:57844"/>
        <note>ligand shared between two neighboring subunits</note>
    </ligand>
</feature>
<feature type="binding site" description="in other chain" evidence="1">
    <location>
        <begin position="246"/>
        <end position="247"/>
    </location>
    <ligand>
        <name>ATP</name>
        <dbReference type="ChEBI" id="CHEBI:30616"/>
        <note>ligand shared between two neighboring subunits</note>
    </ligand>
</feature>
<feature type="binding site" evidence="1">
    <location>
        <position position="263"/>
    </location>
    <ligand>
        <name>ATP</name>
        <dbReference type="ChEBI" id="CHEBI:30616"/>
        <note>ligand shared between two neighboring subunits</note>
    </ligand>
</feature>
<feature type="binding site" evidence="1">
    <location>
        <position position="267"/>
    </location>
    <ligand>
        <name>ATP</name>
        <dbReference type="ChEBI" id="CHEBI:30616"/>
        <note>ligand shared between two neighboring subunits</note>
    </ligand>
</feature>
<feature type="binding site" description="in other chain" evidence="1">
    <location>
        <position position="271"/>
    </location>
    <ligand>
        <name>L-methionine</name>
        <dbReference type="ChEBI" id="CHEBI:57844"/>
        <note>ligand shared between two neighboring subunits</note>
    </ligand>
</feature>